<evidence type="ECO:0000255" key="1">
    <source>
        <dbReference type="HAMAP-Rule" id="MF_00098"/>
    </source>
</evidence>
<reference key="1">
    <citation type="submission" date="2007-10" db="EMBL/GenBank/DDBJ databases">
        <title>Complete sequence of Shewanella pealeana ATCC 700345.</title>
        <authorList>
            <consortium name="US DOE Joint Genome Institute"/>
            <person name="Copeland A."/>
            <person name="Lucas S."/>
            <person name="Lapidus A."/>
            <person name="Barry K."/>
            <person name="Glavina del Rio T."/>
            <person name="Dalin E."/>
            <person name="Tice H."/>
            <person name="Pitluck S."/>
            <person name="Chertkov O."/>
            <person name="Brettin T."/>
            <person name="Bruce D."/>
            <person name="Detter J.C."/>
            <person name="Han C."/>
            <person name="Schmutz J."/>
            <person name="Larimer F."/>
            <person name="Land M."/>
            <person name="Hauser L."/>
            <person name="Kyrpides N."/>
            <person name="Kim E."/>
            <person name="Zhao J.-S.Z."/>
            <person name="Manno D."/>
            <person name="Hawari J."/>
            <person name="Richardson P."/>
        </authorList>
    </citation>
    <scope>NUCLEOTIDE SEQUENCE [LARGE SCALE GENOMIC DNA]</scope>
    <source>
        <strain>ATCC 700345 / ANG-SQ1</strain>
    </source>
</reference>
<name>SYM_SHEPA</name>
<organism>
    <name type="scientific">Shewanella pealeana (strain ATCC 700345 / ANG-SQ1)</name>
    <dbReference type="NCBI Taxonomy" id="398579"/>
    <lineage>
        <taxon>Bacteria</taxon>
        <taxon>Pseudomonadati</taxon>
        <taxon>Pseudomonadota</taxon>
        <taxon>Gammaproteobacteria</taxon>
        <taxon>Alteromonadales</taxon>
        <taxon>Shewanellaceae</taxon>
        <taxon>Shewanella</taxon>
    </lineage>
</organism>
<proteinExistence type="inferred from homology"/>
<protein>
    <recommendedName>
        <fullName evidence="1">Methionine--tRNA ligase</fullName>
        <ecNumber evidence="1">6.1.1.10</ecNumber>
    </recommendedName>
    <alternativeName>
        <fullName evidence="1">Methionyl-tRNA synthetase</fullName>
        <shortName evidence="1">MetRS</shortName>
    </alternativeName>
</protein>
<comment type="function">
    <text evidence="1">Is required not only for elongation of protein synthesis but also for the initiation of all mRNA translation through initiator tRNA(fMet) aminoacylation.</text>
</comment>
<comment type="catalytic activity">
    <reaction evidence="1">
        <text>tRNA(Met) + L-methionine + ATP = L-methionyl-tRNA(Met) + AMP + diphosphate</text>
        <dbReference type="Rhea" id="RHEA:13481"/>
        <dbReference type="Rhea" id="RHEA-COMP:9667"/>
        <dbReference type="Rhea" id="RHEA-COMP:9698"/>
        <dbReference type="ChEBI" id="CHEBI:30616"/>
        <dbReference type="ChEBI" id="CHEBI:33019"/>
        <dbReference type="ChEBI" id="CHEBI:57844"/>
        <dbReference type="ChEBI" id="CHEBI:78442"/>
        <dbReference type="ChEBI" id="CHEBI:78530"/>
        <dbReference type="ChEBI" id="CHEBI:456215"/>
        <dbReference type="EC" id="6.1.1.10"/>
    </reaction>
</comment>
<comment type="cofactor">
    <cofactor evidence="1">
        <name>Zn(2+)</name>
        <dbReference type="ChEBI" id="CHEBI:29105"/>
    </cofactor>
    <text evidence="1">Binds 1 zinc ion per subunit.</text>
</comment>
<comment type="subunit">
    <text evidence="1">Homodimer.</text>
</comment>
<comment type="subcellular location">
    <subcellularLocation>
        <location evidence="1">Cytoplasm</location>
    </subcellularLocation>
</comment>
<comment type="similarity">
    <text evidence="1">Belongs to the class-I aminoacyl-tRNA synthetase family. MetG type 1 subfamily.</text>
</comment>
<accession>A8H3V2</accession>
<feature type="chain" id="PRO_1000075589" description="Methionine--tRNA ligase">
    <location>
        <begin position="1"/>
        <end position="679"/>
    </location>
</feature>
<feature type="domain" description="tRNA-binding" evidence="1">
    <location>
        <begin position="578"/>
        <end position="679"/>
    </location>
</feature>
<feature type="short sequence motif" description="'HIGH' region">
    <location>
        <begin position="15"/>
        <end position="25"/>
    </location>
</feature>
<feature type="short sequence motif" description="'KMSKS' region">
    <location>
        <begin position="332"/>
        <end position="336"/>
    </location>
</feature>
<feature type="binding site" evidence="1">
    <location>
        <position position="146"/>
    </location>
    <ligand>
        <name>Zn(2+)</name>
        <dbReference type="ChEBI" id="CHEBI:29105"/>
    </ligand>
</feature>
<feature type="binding site" evidence="1">
    <location>
        <position position="149"/>
    </location>
    <ligand>
        <name>Zn(2+)</name>
        <dbReference type="ChEBI" id="CHEBI:29105"/>
    </ligand>
</feature>
<feature type="binding site" evidence="1">
    <location>
        <position position="159"/>
    </location>
    <ligand>
        <name>Zn(2+)</name>
        <dbReference type="ChEBI" id="CHEBI:29105"/>
    </ligand>
</feature>
<feature type="binding site" evidence="1">
    <location>
        <position position="162"/>
    </location>
    <ligand>
        <name>Zn(2+)</name>
        <dbReference type="ChEBI" id="CHEBI:29105"/>
    </ligand>
</feature>
<feature type="binding site" evidence="1">
    <location>
        <position position="335"/>
    </location>
    <ligand>
        <name>ATP</name>
        <dbReference type="ChEBI" id="CHEBI:30616"/>
    </ligand>
</feature>
<sequence>MANSQRKILVTSALPYANGPIHLGHMLEYIQTDIWSRFQKLRGHECHYICADDAHGTPIMLKAQQLGMTPEDMIAQVQKEHEKDFADFNIQFDNFHSTHSDENRELASEIYIKLRDAGYIKTKTISQLFDPEKSMFLPDRFVKGTCPRCKSEDQYGDNCDNCGATYSTTDLIDPKSAVSGATPVMKDTEHFFFDLPSFEGMLKEWINSGSLQQEMANKLGEWFEQGLQQWDISRDAPYFGFEIPDAPGKFFYVWLDAPIGYMGSFKNLCNKRDDLNFDDFWSKDSTAEVYHFIGKDIVYFHSLFWPAMLEGAGLRKPTSVYAHGYVTVNGAKMSKSKGTFIKARTYLDNLDPEYLRYYYAAKLSSRIDDLDLNLEDFAQRVNSDLVGKLVNLASRTAGFISKRFDGKLAKIADTSLTESFLAKQETIANFYETREFGKAMREVMTLADIANAYVADSAPWQLIKDDAKQEEAHQVCTNALNLFRILVTYLKPVLPKLAQDVEAFLQMELTWDNLDVDLAGHEIAKFKALMQRVEMKSIEAIIEASKENLQVTAEPEVKKQDKTPLEQDPISEEISFEDFAKIDLRIARIAKAEHVKEANKLLRLELDLGGETKQVFAGIKSAYAPEDLEGKLTVMVANLAPRQMRFGVSEGMVLAAGPGGKDLWIMEPHEGAQPGMKVK</sequence>
<dbReference type="EC" id="6.1.1.10" evidence="1"/>
<dbReference type="EMBL" id="CP000851">
    <property type="protein sequence ID" value="ABV87239.1"/>
    <property type="molecule type" value="Genomic_DNA"/>
</dbReference>
<dbReference type="RefSeq" id="WP_012155157.1">
    <property type="nucleotide sequence ID" value="NC_009901.1"/>
</dbReference>
<dbReference type="SMR" id="A8H3V2"/>
<dbReference type="STRING" id="398579.Spea_1917"/>
<dbReference type="KEGG" id="spl:Spea_1917"/>
<dbReference type="eggNOG" id="COG0073">
    <property type="taxonomic scope" value="Bacteria"/>
</dbReference>
<dbReference type="eggNOG" id="COG0143">
    <property type="taxonomic scope" value="Bacteria"/>
</dbReference>
<dbReference type="HOGENOM" id="CLU_009710_7_0_6"/>
<dbReference type="OrthoDB" id="9810191at2"/>
<dbReference type="Proteomes" id="UP000002608">
    <property type="component" value="Chromosome"/>
</dbReference>
<dbReference type="GO" id="GO:0005829">
    <property type="term" value="C:cytosol"/>
    <property type="evidence" value="ECO:0007669"/>
    <property type="project" value="TreeGrafter"/>
</dbReference>
<dbReference type="GO" id="GO:0005524">
    <property type="term" value="F:ATP binding"/>
    <property type="evidence" value="ECO:0007669"/>
    <property type="project" value="UniProtKB-UniRule"/>
</dbReference>
<dbReference type="GO" id="GO:0046872">
    <property type="term" value="F:metal ion binding"/>
    <property type="evidence" value="ECO:0007669"/>
    <property type="project" value="UniProtKB-KW"/>
</dbReference>
<dbReference type="GO" id="GO:0004825">
    <property type="term" value="F:methionine-tRNA ligase activity"/>
    <property type="evidence" value="ECO:0007669"/>
    <property type="project" value="UniProtKB-UniRule"/>
</dbReference>
<dbReference type="GO" id="GO:0000049">
    <property type="term" value="F:tRNA binding"/>
    <property type="evidence" value="ECO:0007669"/>
    <property type="project" value="UniProtKB-KW"/>
</dbReference>
<dbReference type="GO" id="GO:0006431">
    <property type="term" value="P:methionyl-tRNA aminoacylation"/>
    <property type="evidence" value="ECO:0007669"/>
    <property type="project" value="UniProtKB-UniRule"/>
</dbReference>
<dbReference type="CDD" id="cd07957">
    <property type="entry name" value="Anticodon_Ia_Met"/>
    <property type="match status" value="1"/>
</dbReference>
<dbReference type="CDD" id="cd00814">
    <property type="entry name" value="MetRS_core"/>
    <property type="match status" value="1"/>
</dbReference>
<dbReference type="CDD" id="cd02800">
    <property type="entry name" value="tRNA_bind_EcMetRS_like"/>
    <property type="match status" value="1"/>
</dbReference>
<dbReference type="FunFam" id="1.10.730.10:FF:000005">
    <property type="entry name" value="Methionine--tRNA ligase"/>
    <property type="match status" value="1"/>
</dbReference>
<dbReference type="FunFam" id="2.20.28.20:FF:000001">
    <property type="entry name" value="Methionine--tRNA ligase"/>
    <property type="match status" value="1"/>
</dbReference>
<dbReference type="FunFam" id="2.40.50.140:FF:000042">
    <property type="entry name" value="Methionine--tRNA ligase"/>
    <property type="match status" value="1"/>
</dbReference>
<dbReference type="Gene3D" id="3.40.50.620">
    <property type="entry name" value="HUPs"/>
    <property type="match status" value="1"/>
</dbReference>
<dbReference type="Gene3D" id="1.10.730.10">
    <property type="entry name" value="Isoleucyl-tRNA Synthetase, Domain 1"/>
    <property type="match status" value="1"/>
</dbReference>
<dbReference type="Gene3D" id="2.20.28.20">
    <property type="entry name" value="Methionyl-tRNA synthetase, Zn-domain"/>
    <property type="match status" value="1"/>
</dbReference>
<dbReference type="Gene3D" id="2.40.50.140">
    <property type="entry name" value="Nucleic acid-binding proteins"/>
    <property type="match status" value="1"/>
</dbReference>
<dbReference type="HAMAP" id="MF_00098">
    <property type="entry name" value="Met_tRNA_synth_type1"/>
    <property type="match status" value="1"/>
</dbReference>
<dbReference type="InterPro" id="IPR001412">
    <property type="entry name" value="aa-tRNA-synth_I_CS"/>
</dbReference>
<dbReference type="InterPro" id="IPR041872">
    <property type="entry name" value="Anticodon_Met"/>
</dbReference>
<dbReference type="InterPro" id="IPR004495">
    <property type="entry name" value="Met-tRNA-synth_bsu_C"/>
</dbReference>
<dbReference type="InterPro" id="IPR023458">
    <property type="entry name" value="Met-tRNA_ligase_1"/>
</dbReference>
<dbReference type="InterPro" id="IPR014758">
    <property type="entry name" value="Met-tRNA_synth"/>
</dbReference>
<dbReference type="InterPro" id="IPR015413">
    <property type="entry name" value="Methionyl/Leucyl_tRNA_Synth"/>
</dbReference>
<dbReference type="InterPro" id="IPR033911">
    <property type="entry name" value="MetRS_core"/>
</dbReference>
<dbReference type="InterPro" id="IPR029038">
    <property type="entry name" value="MetRS_Zn"/>
</dbReference>
<dbReference type="InterPro" id="IPR012340">
    <property type="entry name" value="NA-bd_OB-fold"/>
</dbReference>
<dbReference type="InterPro" id="IPR014729">
    <property type="entry name" value="Rossmann-like_a/b/a_fold"/>
</dbReference>
<dbReference type="InterPro" id="IPR002547">
    <property type="entry name" value="tRNA-bd_dom"/>
</dbReference>
<dbReference type="InterPro" id="IPR009080">
    <property type="entry name" value="tRNAsynth_Ia_anticodon-bd"/>
</dbReference>
<dbReference type="NCBIfam" id="TIGR00398">
    <property type="entry name" value="metG"/>
    <property type="match status" value="1"/>
</dbReference>
<dbReference type="NCBIfam" id="TIGR00399">
    <property type="entry name" value="metG_C_term"/>
    <property type="match status" value="1"/>
</dbReference>
<dbReference type="NCBIfam" id="NF001100">
    <property type="entry name" value="PRK00133.1"/>
    <property type="match status" value="1"/>
</dbReference>
<dbReference type="PANTHER" id="PTHR45765">
    <property type="entry name" value="METHIONINE--TRNA LIGASE"/>
    <property type="match status" value="1"/>
</dbReference>
<dbReference type="PANTHER" id="PTHR45765:SF1">
    <property type="entry name" value="METHIONINE--TRNA LIGASE, CYTOPLASMIC"/>
    <property type="match status" value="1"/>
</dbReference>
<dbReference type="Pfam" id="PF19303">
    <property type="entry name" value="Anticodon_3"/>
    <property type="match status" value="1"/>
</dbReference>
<dbReference type="Pfam" id="PF09334">
    <property type="entry name" value="tRNA-synt_1g"/>
    <property type="match status" value="1"/>
</dbReference>
<dbReference type="Pfam" id="PF01588">
    <property type="entry name" value="tRNA_bind"/>
    <property type="match status" value="1"/>
</dbReference>
<dbReference type="PRINTS" id="PR01041">
    <property type="entry name" value="TRNASYNTHMET"/>
</dbReference>
<dbReference type="SUPFAM" id="SSF47323">
    <property type="entry name" value="Anticodon-binding domain of a subclass of class I aminoacyl-tRNA synthetases"/>
    <property type="match status" value="1"/>
</dbReference>
<dbReference type="SUPFAM" id="SSF57770">
    <property type="entry name" value="Methionyl-tRNA synthetase (MetRS), Zn-domain"/>
    <property type="match status" value="1"/>
</dbReference>
<dbReference type="SUPFAM" id="SSF50249">
    <property type="entry name" value="Nucleic acid-binding proteins"/>
    <property type="match status" value="1"/>
</dbReference>
<dbReference type="SUPFAM" id="SSF52374">
    <property type="entry name" value="Nucleotidylyl transferase"/>
    <property type="match status" value="1"/>
</dbReference>
<dbReference type="PROSITE" id="PS00178">
    <property type="entry name" value="AA_TRNA_LIGASE_I"/>
    <property type="match status" value="1"/>
</dbReference>
<dbReference type="PROSITE" id="PS50886">
    <property type="entry name" value="TRBD"/>
    <property type="match status" value="1"/>
</dbReference>
<keyword id="KW-0030">Aminoacyl-tRNA synthetase</keyword>
<keyword id="KW-0067">ATP-binding</keyword>
<keyword id="KW-0963">Cytoplasm</keyword>
<keyword id="KW-0436">Ligase</keyword>
<keyword id="KW-0479">Metal-binding</keyword>
<keyword id="KW-0547">Nucleotide-binding</keyword>
<keyword id="KW-0648">Protein biosynthesis</keyword>
<keyword id="KW-1185">Reference proteome</keyword>
<keyword id="KW-0694">RNA-binding</keyword>
<keyword id="KW-0820">tRNA-binding</keyword>
<keyword id="KW-0862">Zinc</keyword>
<gene>
    <name evidence="1" type="primary">metG</name>
    <name type="ordered locus">Spea_1917</name>
</gene>